<comment type="function">
    <text evidence="1">Probable carboxypeptidase.</text>
</comment>
<comment type="subcellular location">
    <subcellularLocation>
        <location evidence="3">Secreted</location>
    </subcellularLocation>
</comment>
<comment type="tissue specificity">
    <text>Expression not detected.</text>
</comment>
<comment type="similarity">
    <text evidence="3">Belongs to the peptidase S10 family.</text>
</comment>
<comment type="sequence caution" evidence="3">
    <conflict type="erroneous initiation">
        <sequence resource="EMBL-CDS" id="AAC63669"/>
    </conflict>
    <text>Truncated N-terminus.</text>
</comment>
<evidence type="ECO:0000250" key="1"/>
<evidence type="ECO:0000255" key="2"/>
<evidence type="ECO:0000305" key="3"/>
<gene>
    <name type="primary">SCPL23</name>
    <name type="ordered locus">At2g24010</name>
    <name type="ORF">T29E15.21</name>
</gene>
<keyword id="KW-0121">Carboxypeptidase</keyword>
<keyword id="KW-1015">Disulfide bond</keyword>
<keyword id="KW-0325">Glycoprotein</keyword>
<keyword id="KW-0378">Hydrolase</keyword>
<keyword id="KW-0645">Protease</keyword>
<keyword id="KW-1185">Reference proteome</keyword>
<keyword id="KW-0964">Secreted</keyword>
<keyword id="KW-0732">Signal</keyword>
<reference key="1">
    <citation type="journal article" date="1999" name="Nature">
        <title>Sequence and analysis of chromosome 2 of the plant Arabidopsis thaliana.</title>
        <authorList>
            <person name="Lin X."/>
            <person name="Kaul S."/>
            <person name="Rounsley S.D."/>
            <person name="Shea T.P."/>
            <person name="Benito M.-I."/>
            <person name="Town C.D."/>
            <person name="Fujii C.Y."/>
            <person name="Mason T.M."/>
            <person name="Bowman C.L."/>
            <person name="Barnstead M.E."/>
            <person name="Feldblyum T.V."/>
            <person name="Buell C.R."/>
            <person name="Ketchum K.A."/>
            <person name="Lee J.J."/>
            <person name="Ronning C.M."/>
            <person name="Koo H.L."/>
            <person name="Moffat K.S."/>
            <person name="Cronin L.A."/>
            <person name="Shen M."/>
            <person name="Pai G."/>
            <person name="Van Aken S."/>
            <person name="Umayam L."/>
            <person name="Tallon L.J."/>
            <person name="Gill J.E."/>
            <person name="Adams M.D."/>
            <person name="Carrera A.J."/>
            <person name="Creasy T.H."/>
            <person name="Goodman H.M."/>
            <person name="Somerville C.R."/>
            <person name="Copenhaver G.P."/>
            <person name="Preuss D."/>
            <person name="Nierman W.C."/>
            <person name="White O."/>
            <person name="Eisen J.A."/>
            <person name="Salzberg S.L."/>
            <person name="Fraser C.M."/>
            <person name="Venter J.C."/>
        </authorList>
    </citation>
    <scope>NUCLEOTIDE SEQUENCE [LARGE SCALE GENOMIC DNA]</scope>
    <source>
        <strain>cv. Columbia</strain>
    </source>
</reference>
<reference key="2">
    <citation type="journal article" date="2017" name="Plant J.">
        <title>Araport11: a complete reannotation of the Arabidopsis thaliana reference genome.</title>
        <authorList>
            <person name="Cheng C.Y."/>
            <person name="Krishnakumar V."/>
            <person name="Chan A.P."/>
            <person name="Thibaud-Nissen F."/>
            <person name="Schobel S."/>
            <person name="Town C.D."/>
        </authorList>
    </citation>
    <scope>GENOME REANNOTATION</scope>
    <source>
        <strain>cv. Columbia</strain>
    </source>
</reference>
<reference key="3">
    <citation type="journal article" date="2005" name="Plant Physiol.">
        <title>An expression and bioinformatics analysis of the Arabidopsis serine carboxypeptidase-like gene family.</title>
        <authorList>
            <person name="Fraser C.M."/>
            <person name="Rider L.W."/>
            <person name="Chapple C."/>
        </authorList>
    </citation>
    <scope>GENE FAMILY</scope>
    <scope>NOMENCLATURE</scope>
</reference>
<sequence>MARIHLIIILLVISSTSSSSSSLREQEEDMIKALPGQPQVGFSQFSGYVTVNESHGRSLFYWLTESPSSSHTKPLLLWLNGGPGCSSIGYGASEEIGPFRINKTGSNLYLNKFTWNTEANILFLESPAGVGFSYTNTSSDLKDSGDERTAQENLIFLIKWMSRFPQYQYRDFYIVGESYAGHYVPQLAKKIHLYNKAFNNTPIINLKGFMVGNGDMDKHYDRLGAAMYAWSHAMISDKTYKSILKHCSFTADKTSDKCNWALYFAYREFGKVNGYSIYSPSCVHQTNQTKFLHGRLLVEEYEYDPCTESYAEIYYNRPDVQRAMHANLTSIPYKWTLCNMVVNNNWKDSEFSMLPIYKELTAAGLRIWVFSGDTDAVVPVTGTRLALSKLNLPVKTPWYPWYSEKQVGGWTEVYEGLTFATIRGAGHEVPVLQPERALTLLRSFLAGKELPRSY</sequence>
<dbReference type="EC" id="3.4.16.-"/>
<dbReference type="EMBL" id="AC005170">
    <property type="protein sequence ID" value="AAC63669.1"/>
    <property type="status" value="ALT_INIT"/>
    <property type="molecule type" value="Genomic_DNA"/>
</dbReference>
<dbReference type="EMBL" id="CP002685">
    <property type="protein sequence ID" value="AEC07517.2"/>
    <property type="molecule type" value="Genomic_DNA"/>
</dbReference>
<dbReference type="PIR" id="E84631">
    <property type="entry name" value="E84631"/>
</dbReference>
<dbReference type="RefSeq" id="NP_001318279.1">
    <property type="nucleotide sequence ID" value="NM_001335912.1"/>
</dbReference>
<dbReference type="SMR" id="O82229"/>
<dbReference type="ESTHER" id="arath-SCP23">
    <property type="family name" value="Carboxypeptidase_S10"/>
</dbReference>
<dbReference type="MEROPS" id="S10.A30"/>
<dbReference type="GlyCosmos" id="O82229">
    <property type="glycosylation" value="5 sites, No reported glycans"/>
</dbReference>
<dbReference type="GlyGen" id="O82229">
    <property type="glycosylation" value="5 sites"/>
</dbReference>
<dbReference type="iPTMnet" id="O82229"/>
<dbReference type="PaxDb" id="3702-AT2G24010.1"/>
<dbReference type="ProteomicsDB" id="226630"/>
<dbReference type="EnsemblPlants" id="AT2G24010.1">
    <property type="protein sequence ID" value="AT2G24010.1"/>
    <property type="gene ID" value="AT2G24010"/>
</dbReference>
<dbReference type="GeneID" id="816935"/>
<dbReference type="Gramene" id="AT2G24010.1">
    <property type="protein sequence ID" value="AT2G24010.1"/>
    <property type="gene ID" value="AT2G24010"/>
</dbReference>
<dbReference type="KEGG" id="ath:AT2G24010"/>
<dbReference type="Araport" id="AT2G24010"/>
<dbReference type="TAIR" id="AT2G24010">
    <property type="gene designation" value="SCPL23"/>
</dbReference>
<dbReference type="eggNOG" id="KOG1282">
    <property type="taxonomic scope" value="Eukaryota"/>
</dbReference>
<dbReference type="HOGENOM" id="CLU_008523_13_0_1"/>
<dbReference type="InParanoid" id="O82229"/>
<dbReference type="OrthoDB" id="443318at2759"/>
<dbReference type="PhylomeDB" id="O82229"/>
<dbReference type="PRO" id="PR:O82229"/>
<dbReference type="Proteomes" id="UP000006548">
    <property type="component" value="Chromosome 2"/>
</dbReference>
<dbReference type="ExpressionAtlas" id="O82229">
    <property type="expression patterns" value="baseline and differential"/>
</dbReference>
<dbReference type="GO" id="GO:0005576">
    <property type="term" value="C:extracellular region"/>
    <property type="evidence" value="ECO:0007669"/>
    <property type="project" value="UniProtKB-SubCell"/>
</dbReference>
<dbReference type="GO" id="GO:0004185">
    <property type="term" value="F:serine-type carboxypeptidase activity"/>
    <property type="evidence" value="ECO:0007669"/>
    <property type="project" value="InterPro"/>
</dbReference>
<dbReference type="GO" id="GO:0006508">
    <property type="term" value="P:proteolysis"/>
    <property type="evidence" value="ECO:0007669"/>
    <property type="project" value="UniProtKB-KW"/>
</dbReference>
<dbReference type="FunFam" id="3.40.50.11320:FF:000002">
    <property type="entry name" value="Carboxypeptidase"/>
    <property type="match status" value="1"/>
</dbReference>
<dbReference type="FunFam" id="3.40.50.1820:FF:000013">
    <property type="entry name" value="Carboxypeptidase"/>
    <property type="match status" value="1"/>
</dbReference>
<dbReference type="Gene3D" id="3.40.50.11320">
    <property type="match status" value="1"/>
</dbReference>
<dbReference type="Gene3D" id="6.10.250.940">
    <property type="match status" value="1"/>
</dbReference>
<dbReference type="Gene3D" id="3.40.50.1820">
    <property type="entry name" value="alpha/beta hydrolase"/>
    <property type="match status" value="1"/>
</dbReference>
<dbReference type="InterPro" id="IPR029058">
    <property type="entry name" value="AB_hydrolase_fold"/>
</dbReference>
<dbReference type="InterPro" id="IPR001563">
    <property type="entry name" value="Peptidase_S10"/>
</dbReference>
<dbReference type="InterPro" id="IPR033124">
    <property type="entry name" value="Ser_caboxypep_his_AS"/>
</dbReference>
<dbReference type="InterPro" id="IPR018202">
    <property type="entry name" value="Ser_caboxypep_ser_AS"/>
</dbReference>
<dbReference type="PANTHER" id="PTHR11802:SF298">
    <property type="entry name" value="SERINE CARBOXYPEPTIDASE-LIKE 22-RELATED"/>
    <property type="match status" value="1"/>
</dbReference>
<dbReference type="PANTHER" id="PTHR11802">
    <property type="entry name" value="SERINE PROTEASE FAMILY S10 SERINE CARBOXYPEPTIDASE"/>
    <property type="match status" value="1"/>
</dbReference>
<dbReference type="Pfam" id="PF00450">
    <property type="entry name" value="Peptidase_S10"/>
    <property type="match status" value="1"/>
</dbReference>
<dbReference type="PRINTS" id="PR00724">
    <property type="entry name" value="CRBOXYPTASEC"/>
</dbReference>
<dbReference type="SUPFAM" id="SSF53474">
    <property type="entry name" value="alpha/beta-Hydrolases"/>
    <property type="match status" value="1"/>
</dbReference>
<dbReference type="PROSITE" id="PS00560">
    <property type="entry name" value="CARBOXYPEPT_SER_HIS"/>
    <property type="match status" value="1"/>
</dbReference>
<dbReference type="PROSITE" id="PS00131">
    <property type="entry name" value="CARBOXYPEPT_SER_SER"/>
    <property type="match status" value="1"/>
</dbReference>
<name>SCP23_ARATH</name>
<protein>
    <recommendedName>
        <fullName>Putative serine carboxypeptidase-like 23</fullName>
        <ecNumber>3.4.16.-</ecNumber>
    </recommendedName>
</protein>
<proteinExistence type="evidence at transcript level"/>
<feature type="signal peptide" evidence="2">
    <location>
        <begin position="1"/>
        <end position="22"/>
    </location>
</feature>
<feature type="chain" id="PRO_0000274639" description="Putative serine carboxypeptidase-like 23">
    <location>
        <begin position="23"/>
        <end position="454"/>
    </location>
</feature>
<feature type="active site" evidence="1">
    <location>
        <position position="178"/>
    </location>
</feature>
<feature type="active site" evidence="1">
    <location>
        <position position="375"/>
    </location>
</feature>
<feature type="active site" evidence="1">
    <location>
        <position position="427"/>
    </location>
</feature>
<feature type="glycosylation site" description="N-linked (GlcNAc...) asparagine" evidence="2">
    <location>
        <position position="52"/>
    </location>
</feature>
<feature type="glycosylation site" description="N-linked (GlcNAc...) asparagine" evidence="2">
    <location>
        <position position="102"/>
    </location>
</feature>
<feature type="glycosylation site" description="N-linked (GlcNAc...) asparagine" evidence="2">
    <location>
        <position position="136"/>
    </location>
</feature>
<feature type="glycosylation site" description="N-linked (GlcNAc...) asparagine" evidence="2">
    <location>
        <position position="287"/>
    </location>
</feature>
<feature type="glycosylation site" description="N-linked (GlcNAc...) asparagine" evidence="2">
    <location>
        <position position="327"/>
    </location>
</feature>
<feature type="disulfide bond" evidence="1">
    <location>
        <begin position="85"/>
        <end position="338"/>
    </location>
</feature>
<feature type="disulfide bond" evidence="1">
    <location>
        <begin position="247"/>
        <end position="258"/>
    </location>
</feature>
<feature type="disulfide bond" evidence="1">
    <location>
        <begin position="282"/>
        <end position="306"/>
    </location>
</feature>
<organism>
    <name type="scientific">Arabidopsis thaliana</name>
    <name type="common">Mouse-ear cress</name>
    <dbReference type="NCBI Taxonomy" id="3702"/>
    <lineage>
        <taxon>Eukaryota</taxon>
        <taxon>Viridiplantae</taxon>
        <taxon>Streptophyta</taxon>
        <taxon>Embryophyta</taxon>
        <taxon>Tracheophyta</taxon>
        <taxon>Spermatophyta</taxon>
        <taxon>Magnoliopsida</taxon>
        <taxon>eudicotyledons</taxon>
        <taxon>Gunneridae</taxon>
        <taxon>Pentapetalae</taxon>
        <taxon>rosids</taxon>
        <taxon>malvids</taxon>
        <taxon>Brassicales</taxon>
        <taxon>Brassicaceae</taxon>
        <taxon>Camelineae</taxon>
        <taxon>Arabidopsis</taxon>
    </lineage>
</organism>
<accession>O82229</accession>
<accession>F4INP1</accession>